<reference key="1">
    <citation type="submission" date="2008-12" db="EMBL/GenBank/DDBJ databases">
        <title>Complete sequence of chromosome of Shewanella baltica OS223.</title>
        <authorList>
            <consortium name="US DOE Joint Genome Institute"/>
            <person name="Lucas S."/>
            <person name="Copeland A."/>
            <person name="Lapidus A."/>
            <person name="Glavina del Rio T."/>
            <person name="Dalin E."/>
            <person name="Tice H."/>
            <person name="Bruce D."/>
            <person name="Goodwin L."/>
            <person name="Pitluck S."/>
            <person name="Chertkov O."/>
            <person name="Meincke L."/>
            <person name="Brettin T."/>
            <person name="Detter J.C."/>
            <person name="Han C."/>
            <person name="Kuske C.R."/>
            <person name="Larimer F."/>
            <person name="Land M."/>
            <person name="Hauser L."/>
            <person name="Kyrpides N."/>
            <person name="Ovchinnikova G."/>
            <person name="Brettar I."/>
            <person name="Rodrigues J."/>
            <person name="Konstantinidis K."/>
            <person name="Tiedje J."/>
        </authorList>
    </citation>
    <scope>NUCLEOTIDE SEQUENCE [LARGE SCALE GENOMIC DNA]</scope>
    <source>
        <strain>OS223</strain>
    </source>
</reference>
<sequence length="116" mass="12378">MTDQADTAMPIQFTDAAAAKVKGLLEEEQNPALKLRVYVTGGGCSGFQYGFTFDEKVNDGDFTIEKQGVLLVVDPMSLQYLVGGEVDYTSGLEGSRFFVKNPNATTTCGCGASFSV</sequence>
<protein>
    <recommendedName>
        <fullName evidence="1">Iron-sulfur cluster insertion protein ErpA</fullName>
    </recommendedName>
</protein>
<dbReference type="EMBL" id="CP001252">
    <property type="protein sequence ID" value="ACK47634.1"/>
    <property type="molecule type" value="Genomic_DNA"/>
</dbReference>
<dbReference type="RefSeq" id="WP_006080742.1">
    <property type="nucleotide sequence ID" value="NC_011663.1"/>
</dbReference>
<dbReference type="SMR" id="B8EBT9"/>
<dbReference type="GeneID" id="11771515"/>
<dbReference type="KEGG" id="sbp:Sbal223_3149"/>
<dbReference type="HOGENOM" id="CLU_069054_5_3_6"/>
<dbReference type="Proteomes" id="UP000002507">
    <property type="component" value="Chromosome"/>
</dbReference>
<dbReference type="GO" id="GO:0005829">
    <property type="term" value="C:cytosol"/>
    <property type="evidence" value="ECO:0007669"/>
    <property type="project" value="TreeGrafter"/>
</dbReference>
<dbReference type="GO" id="GO:0051537">
    <property type="term" value="F:2 iron, 2 sulfur cluster binding"/>
    <property type="evidence" value="ECO:0007669"/>
    <property type="project" value="TreeGrafter"/>
</dbReference>
<dbReference type="GO" id="GO:0051539">
    <property type="term" value="F:4 iron, 4 sulfur cluster binding"/>
    <property type="evidence" value="ECO:0007669"/>
    <property type="project" value="TreeGrafter"/>
</dbReference>
<dbReference type="GO" id="GO:0005506">
    <property type="term" value="F:iron ion binding"/>
    <property type="evidence" value="ECO:0007669"/>
    <property type="project" value="UniProtKB-UniRule"/>
</dbReference>
<dbReference type="GO" id="GO:0016226">
    <property type="term" value="P:iron-sulfur cluster assembly"/>
    <property type="evidence" value="ECO:0007669"/>
    <property type="project" value="UniProtKB-UniRule"/>
</dbReference>
<dbReference type="FunFam" id="2.60.300.12:FF:000002">
    <property type="entry name" value="Iron-sulfur cluster insertion protein ErpA"/>
    <property type="match status" value="1"/>
</dbReference>
<dbReference type="Gene3D" id="2.60.300.12">
    <property type="entry name" value="HesB-like domain"/>
    <property type="match status" value="1"/>
</dbReference>
<dbReference type="HAMAP" id="MF_01380">
    <property type="entry name" value="Fe_S_insert_ErpA"/>
    <property type="match status" value="1"/>
</dbReference>
<dbReference type="InterPro" id="IPR000361">
    <property type="entry name" value="FeS_biogenesis"/>
</dbReference>
<dbReference type="InterPro" id="IPR016092">
    <property type="entry name" value="FeS_cluster_insertion"/>
</dbReference>
<dbReference type="InterPro" id="IPR017870">
    <property type="entry name" value="FeS_cluster_insertion_CS"/>
</dbReference>
<dbReference type="InterPro" id="IPR023063">
    <property type="entry name" value="FeS_cluster_insertion_RrpA"/>
</dbReference>
<dbReference type="InterPro" id="IPR035903">
    <property type="entry name" value="HesB-like_dom_sf"/>
</dbReference>
<dbReference type="NCBIfam" id="TIGR00049">
    <property type="entry name" value="iron-sulfur cluster assembly accessory protein"/>
    <property type="match status" value="1"/>
</dbReference>
<dbReference type="NCBIfam" id="NF010147">
    <property type="entry name" value="PRK13623.1"/>
    <property type="match status" value="1"/>
</dbReference>
<dbReference type="PANTHER" id="PTHR43011">
    <property type="entry name" value="IRON-SULFUR CLUSTER ASSEMBLY 2 HOMOLOG, MITOCHONDRIAL"/>
    <property type="match status" value="1"/>
</dbReference>
<dbReference type="PANTHER" id="PTHR43011:SF1">
    <property type="entry name" value="IRON-SULFUR CLUSTER ASSEMBLY 2 HOMOLOG, MITOCHONDRIAL"/>
    <property type="match status" value="1"/>
</dbReference>
<dbReference type="Pfam" id="PF01521">
    <property type="entry name" value="Fe-S_biosyn"/>
    <property type="match status" value="1"/>
</dbReference>
<dbReference type="SUPFAM" id="SSF89360">
    <property type="entry name" value="HesB-like domain"/>
    <property type="match status" value="1"/>
</dbReference>
<dbReference type="PROSITE" id="PS01152">
    <property type="entry name" value="HESB"/>
    <property type="match status" value="1"/>
</dbReference>
<name>ERPA_SHEB2</name>
<keyword id="KW-0408">Iron</keyword>
<keyword id="KW-0411">Iron-sulfur</keyword>
<keyword id="KW-0479">Metal-binding</keyword>
<comment type="function">
    <text evidence="1">Required for insertion of 4Fe-4S clusters for at least IspG.</text>
</comment>
<comment type="cofactor">
    <cofactor evidence="1">
        <name>iron-sulfur cluster</name>
        <dbReference type="ChEBI" id="CHEBI:30408"/>
    </cofactor>
    <text evidence="1">Binds 1 iron-sulfur cluster per subunit.</text>
</comment>
<comment type="subunit">
    <text evidence="1">Homodimer.</text>
</comment>
<comment type="similarity">
    <text evidence="1">Belongs to the HesB/IscA family.</text>
</comment>
<organism>
    <name type="scientific">Shewanella baltica (strain OS223)</name>
    <dbReference type="NCBI Taxonomy" id="407976"/>
    <lineage>
        <taxon>Bacteria</taxon>
        <taxon>Pseudomonadati</taxon>
        <taxon>Pseudomonadota</taxon>
        <taxon>Gammaproteobacteria</taxon>
        <taxon>Alteromonadales</taxon>
        <taxon>Shewanellaceae</taxon>
        <taxon>Shewanella</taxon>
    </lineage>
</organism>
<proteinExistence type="inferred from homology"/>
<accession>B8EBT9</accession>
<feature type="chain" id="PRO_1000184205" description="Iron-sulfur cluster insertion protein ErpA">
    <location>
        <begin position="1"/>
        <end position="116"/>
    </location>
</feature>
<feature type="binding site" evidence="1">
    <location>
        <position position="44"/>
    </location>
    <ligand>
        <name>iron-sulfur cluster</name>
        <dbReference type="ChEBI" id="CHEBI:30408"/>
    </ligand>
</feature>
<feature type="binding site" evidence="1">
    <location>
        <position position="108"/>
    </location>
    <ligand>
        <name>iron-sulfur cluster</name>
        <dbReference type="ChEBI" id="CHEBI:30408"/>
    </ligand>
</feature>
<feature type="binding site" evidence="1">
    <location>
        <position position="110"/>
    </location>
    <ligand>
        <name>iron-sulfur cluster</name>
        <dbReference type="ChEBI" id="CHEBI:30408"/>
    </ligand>
</feature>
<gene>
    <name evidence="1" type="primary">erpA</name>
    <name type="ordered locus">Sbal223_3149</name>
</gene>
<evidence type="ECO:0000255" key="1">
    <source>
        <dbReference type="HAMAP-Rule" id="MF_01380"/>
    </source>
</evidence>